<reference key="1">
    <citation type="journal article" date="2003" name="Genome Res.">
        <title>Tropheryma whipplei twist: a human pathogenic Actinobacteria with a reduced genome.</title>
        <authorList>
            <person name="Raoult D."/>
            <person name="Ogata H."/>
            <person name="Audic S."/>
            <person name="Robert C."/>
            <person name="Suhre K."/>
            <person name="Drancourt M."/>
            <person name="Claverie J.-M."/>
        </authorList>
    </citation>
    <scope>NUCLEOTIDE SEQUENCE [LARGE SCALE GENOMIC DNA]</scope>
    <source>
        <strain>Twist</strain>
    </source>
</reference>
<organism>
    <name type="scientific">Tropheryma whipplei (strain Twist)</name>
    <name type="common">Whipple's bacillus</name>
    <dbReference type="NCBI Taxonomy" id="203267"/>
    <lineage>
        <taxon>Bacteria</taxon>
        <taxon>Bacillati</taxon>
        <taxon>Actinomycetota</taxon>
        <taxon>Actinomycetes</taxon>
        <taxon>Micrococcales</taxon>
        <taxon>Tropherymataceae</taxon>
        <taxon>Tropheryma</taxon>
    </lineage>
</organism>
<dbReference type="EC" id="2.7.2.3" evidence="1"/>
<dbReference type="EMBL" id="AE014184">
    <property type="protein sequence ID" value="AAO44398.1"/>
    <property type="molecule type" value="Genomic_DNA"/>
</dbReference>
<dbReference type="RefSeq" id="WP_011102490.1">
    <property type="nucleotide sequence ID" value="NC_004572.3"/>
</dbReference>
<dbReference type="SMR" id="Q83GI2"/>
<dbReference type="STRING" id="203267.TWT_301"/>
<dbReference type="KEGG" id="twh:TWT_301"/>
<dbReference type="eggNOG" id="COG0126">
    <property type="taxonomic scope" value="Bacteria"/>
</dbReference>
<dbReference type="HOGENOM" id="CLU_025427_0_2_11"/>
<dbReference type="OrthoDB" id="9808460at2"/>
<dbReference type="UniPathway" id="UPA00109">
    <property type="reaction ID" value="UER00185"/>
</dbReference>
<dbReference type="Proteomes" id="UP000002200">
    <property type="component" value="Chromosome"/>
</dbReference>
<dbReference type="GO" id="GO:0005829">
    <property type="term" value="C:cytosol"/>
    <property type="evidence" value="ECO:0007669"/>
    <property type="project" value="TreeGrafter"/>
</dbReference>
<dbReference type="GO" id="GO:0043531">
    <property type="term" value="F:ADP binding"/>
    <property type="evidence" value="ECO:0007669"/>
    <property type="project" value="TreeGrafter"/>
</dbReference>
<dbReference type="GO" id="GO:0005524">
    <property type="term" value="F:ATP binding"/>
    <property type="evidence" value="ECO:0007669"/>
    <property type="project" value="UniProtKB-KW"/>
</dbReference>
<dbReference type="GO" id="GO:0004618">
    <property type="term" value="F:phosphoglycerate kinase activity"/>
    <property type="evidence" value="ECO:0007669"/>
    <property type="project" value="UniProtKB-UniRule"/>
</dbReference>
<dbReference type="GO" id="GO:0006094">
    <property type="term" value="P:gluconeogenesis"/>
    <property type="evidence" value="ECO:0007669"/>
    <property type="project" value="TreeGrafter"/>
</dbReference>
<dbReference type="GO" id="GO:0006096">
    <property type="term" value="P:glycolytic process"/>
    <property type="evidence" value="ECO:0007669"/>
    <property type="project" value="UniProtKB-UniRule"/>
</dbReference>
<dbReference type="FunFam" id="3.40.50.1260:FF:000031">
    <property type="entry name" value="Phosphoglycerate kinase 1"/>
    <property type="match status" value="1"/>
</dbReference>
<dbReference type="Gene3D" id="3.40.50.1260">
    <property type="entry name" value="Phosphoglycerate kinase, N-terminal domain"/>
    <property type="match status" value="2"/>
</dbReference>
<dbReference type="HAMAP" id="MF_00145">
    <property type="entry name" value="Phosphoglyc_kinase"/>
    <property type="match status" value="1"/>
</dbReference>
<dbReference type="InterPro" id="IPR001576">
    <property type="entry name" value="Phosphoglycerate_kinase"/>
</dbReference>
<dbReference type="InterPro" id="IPR015824">
    <property type="entry name" value="Phosphoglycerate_kinase_N"/>
</dbReference>
<dbReference type="InterPro" id="IPR036043">
    <property type="entry name" value="Phosphoglycerate_kinase_sf"/>
</dbReference>
<dbReference type="PANTHER" id="PTHR11406">
    <property type="entry name" value="PHOSPHOGLYCERATE KINASE"/>
    <property type="match status" value="1"/>
</dbReference>
<dbReference type="PANTHER" id="PTHR11406:SF23">
    <property type="entry name" value="PHOSPHOGLYCERATE KINASE 1, CHLOROPLASTIC-RELATED"/>
    <property type="match status" value="1"/>
</dbReference>
<dbReference type="Pfam" id="PF00162">
    <property type="entry name" value="PGK"/>
    <property type="match status" value="1"/>
</dbReference>
<dbReference type="PIRSF" id="PIRSF000724">
    <property type="entry name" value="Pgk"/>
    <property type="match status" value="1"/>
</dbReference>
<dbReference type="PRINTS" id="PR00477">
    <property type="entry name" value="PHGLYCKINASE"/>
</dbReference>
<dbReference type="SUPFAM" id="SSF53748">
    <property type="entry name" value="Phosphoglycerate kinase"/>
    <property type="match status" value="1"/>
</dbReference>
<name>PGK_TROWT</name>
<protein>
    <recommendedName>
        <fullName evidence="1">Phosphoglycerate kinase</fullName>
        <ecNumber evidence="1">2.7.2.3</ecNumber>
    </recommendedName>
</protein>
<gene>
    <name evidence="1" type="primary">pgk</name>
    <name type="ordered locus">TWT_301</name>
</gene>
<evidence type="ECO:0000255" key="1">
    <source>
        <dbReference type="HAMAP-Rule" id="MF_00145"/>
    </source>
</evidence>
<sequence length="395" mass="42689">MRTLGGFTFPCDAPVFVRVDFNVPMDEVGTITDDLRIRASLPTIESLLGRGAPLILISHLGRPVKNEQQGFSLKPCAERLSEYIGVNVPLVDFLDLDTKLYGELTRHLDKSGIVLFENIRFFAEETSKAQADRRILAEQLAPFAGAYVNDAFGASHRRHASVYELAQAFSNKAAGFLIESEMQAFSHLASEAKRPYTVILGGAKLSDKLRLIENILPTVDRLLLCGGMAFTFLAAQGCETGKSLLEESFIPEANKIIDFAKQNNVELILPVDVIEARSLTSPLGVVSKAESISYMGLDIGPETQSIFRNVIQDSKTVFWNGPAGLFENPSFSNGTRALLDALSSSSAFTFIGGGDTAAAVSLLGFDYGDFSHVSTGGGACLELLEGKILPALEVL</sequence>
<comment type="catalytic activity">
    <reaction evidence="1">
        <text>(2R)-3-phosphoglycerate + ATP = (2R)-3-phospho-glyceroyl phosphate + ADP</text>
        <dbReference type="Rhea" id="RHEA:14801"/>
        <dbReference type="ChEBI" id="CHEBI:30616"/>
        <dbReference type="ChEBI" id="CHEBI:57604"/>
        <dbReference type="ChEBI" id="CHEBI:58272"/>
        <dbReference type="ChEBI" id="CHEBI:456216"/>
        <dbReference type="EC" id="2.7.2.3"/>
    </reaction>
</comment>
<comment type="pathway">
    <text evidence="1">Carbohydrate degradation; glycolysis; pyruvate from D-glyceraldehyde 3-phosphate: step 2/5.</text>
</comment>
<comment type="subunit">
    <text evidence="1">Monomer.</text>
</comment>
<comment type="subcellular location">
    <subcellularLocation>
        <location evidence="1">Cytoplasm</location>
    </subcellularLocation>
</comment>
<comment type="similarity">
    <text evidence="1">Belongs to the phosphoglycerate kinase family.</text>
</comment>
<proteinExistence type="inferred from homology"/>
<accession>Q83GI2</accession>
<feature type="chain" id="PRO_0000146032" description="Phosphoglycerate kinase">
    <location>
        <begin position="1"/>
        <end position="395"/>
    </location>
</feature>
<feature type="binding site" evidence="1">
    <location>
        <begin position="20"/>
        <end position="22"/>
    </location>
    <ligand>
        <name>substrate</name>
    </ligand>
</feature>
<feature type="binding site" evidence="1">
    <location>
        <position position="36"/>
    </location>
    <ligand>
        <name>substrate</name>
    </ligand>
</feature>
<feature type="binding site" evidence="1">
    <location>
        <begin position="59"/>
        <end position="62"/>
    </location>
    <ligand>
        <name>substrate</name>
    </ligand>
</feature>
<feature type="binding site" evidence="1">
    <location>
        <position position="120"/>
    </location>
    <ligand>
        <name>substrate</name>
    </ligand>
</feature>
<feature type="binding site" evidence="1">
    <location>
        <position position="157"/>
    </location>
    <ligand>
        <name>substrate</name>
    </ligand>
</feature>
<feature type="binding site" evidence="1">
    <location>
        <position position="208"/>
    </location>
    <ligand>
        <name>ATP</name>
        <dbReference type="ChEBI" id="CHEBI:30616"/>
    </ligand>
</feature>
<feature type="binding site" evidence="1">
    <location>
        <position position="296"/>
    </location>
    <ligand>
        <name>ATP</name>
        <dbReference type="ChEBI" id="CHEBI:30616"/>
    </ligand>
</feature>
<feature type="binding site" evidence="1">
    <location>
        <position position="327"/>
    </location>
    <ligand>
        <name>ATP</name>
        <dbReference type="ChEBI" id="CHEBI:30616"/>
    </ligand>
</feature>
<feature type="binding site" evidence="1">
    <location>
        <begin position="353"/>
        <end position="356"/>
    </location>
    <ligand>
        <name>ATP</name>
        <dbReference type="ChEBI" id="CHEBI:30616"/>
    </ligand>
</feature>
<keyword id="KW-0067">ATP-binding</keyword>
<keyword id="KW-0963">Cytoplasm</keyword>
<keyword id="KW-0324">Glycolysis</keyword>
<keyword id="KW-0418">Kinase</keyword>
<keyword id="KW-0547">Nucleotide-binding</keyword>
<keyword id="KW-1185">Reference proteome</keyword>
<keyword id="KW-0808">Transferase</keyword>